<dbReference type="EC" id="1.1.1.27" evidence="2"/>
<dbReference type="EMBL" id="AP009324">
    <property type="protein sequence ID" value="BAF79469.1"/>
    <property type="molecule type" value="Genomic_DNA"/>
</dbReference>
<dbReference type="RefSeq" id="WP_000846636.1">
    <property type="nucleotide sequence ID" value="NC_009782.1"/>
</dbReference>
<dbReference type="SMR" id="A7X6Y1"/>
<dbReference type="KEGG" id="saw:SAHV_2586"/>
<dbReference type="HOGENOM" id="CLU_045401_1_1_9"/>
<dbReference type="UniPathway" id="UPA00554">
    <property type="reaction ID" value="UER00611"/>
</dbReference>
<dbReference type="GO" id="GO:0005737">
    <property type="term" value="C:cytoplasm"/>
    <property type="evidence" value="ECO:0007669"/>
    <property type="project" value="UniProtKB-SubCell"/>
</dbReference>
<dbReference type="GO" id="GO:0004459">
    <property type="term" value="F:L-lactate dehydrogenase activity"/>
    <property type="evidence" value="ECO:0007669"/>
    <property type="project" value="UniProtKB-UniRule"/>
</dbReference>
<dbReference type="GO" id="GO:0006096">
    <property type="term" value="P:glycolytic process"/>
    <property type="evidence" value="ECO:0007669"/>
    <property type="project" value="UniProtKB-UniRule"/>
</dbReference>
<dbReference type="GO" id="GO:0006089">
    <property type="term" value="P:lactate metabolic process"/>
    <property type="evidence" value="ECO:0007669"/>
    <property type="project" value="TreeGrafter"/>
</dbReference>
<dbReference type="CDD" id="cd05291">
    <property type="entry name" value="HicDH_like"/>
    <property type="match status" value="1"/>
</dbReference>
<dbReference type="FunFam" id="3.40.50.720:FF:000018">
    <property type="entry name" value="Malate dehydrogenase"/>
    <property type="match status" value="1"/>
</dbReference>
<dbReference type="Gene3D" id="3.90.110.10">
    <property type="entry name" value="Lactate dehydrogenase/glycoside hydrolase, family 4, C-terminal"/>
    <property type="match status" value="1"/>
</dbReference>
<dbReference type="Gene3D" id="3.40.50.720">
    <property type="entry name" value="NAD(P)-binding Rossmann-like Domain"/>
    <property type="match status" value="1"/>
</dbReference>
<dbReference type="HAMAP" id="MF_00488">
    <property type="entry name" value="Lactate_dehydrog"/>
    <property type="match status" value="1"/>
</dbReference>
<dbReference type="InterPro" id="IPR001557">
    <property type="entry name" value="L-lactate/malate_DH"/>
</dbReference>
<dbReference type="InterPro" id="IPR011304">
    <property type="entry name" value="L-lactate_DH"/>
</dbReference>
<dbReference type="InterPro" id="IPR018177">
    <property type="entry name" value="L-lactate_DH_AS"/>
</dbReference>
<dbReference type="InterPro" id="IPR022383">
    <property type="entry name" value="Lactate/malate_DH_C"/>
</dbReference>
<dbReference type="InterPro" id="IPR001236">
    <property type="entry name" value="Lactate/malate_DH_N"/>
</dbReference>
<dbReference type="InterPro" id="IPR015955">
    <property type="entry name" value="Lactate_DH/Glyco_Ohase_4_C"/>
</dbReference>
<dbReference type="InterPro" id="IPR036291">
    <property type="entry name" value="NAD(P)-bd_dom_sf"/>
</dbReference>
<dbReference type="NCBIfam" id="TIGR01771">
    <property type="entry name" value="L-LDH-NAD"/>
    <property type="match status" value="1"/>
</dbReference>
<dbReference type="NCBIfam" id="NF000824">
    <property type="entry name" value="PRK00066.1"/>
    <property type="match status" value="1"/>
</dbReference>
<dbReference type="PANTHER" id="PTHR43128">
    <property type="entry name" value="L-2-HYDROXYCARBOXYLATE DEHYDROGENASE (NAD(P)(+))"/>
    <property type="match status" value="1"/>
</dbReference>
<dbReference type="PANTHER" id="PTHR43128:SF16">
    <property type="entry name" value="L-LACTATE DEHYDROGENASE"/>
    <property type="match status" value="1"/>
</dbReference>
<dbReference type="Pfam" id="PF02866">
    <property type="entry name" value="Ldh_1_C"/>
    <property type="match status" value="1"/>
</dbReference>
<dbReference type="Pfam" id="PF00056">
    <property type="entry name" value="Ldh_1_N"/>
    <property type="match status" value="1"/>
</dbReference>
<dbReference type="PIRSF" id="PIRSF000102">
    <property type="entry name" value="Lac_mal_DH"/>
    <property type="match status" value="1"/>
</dbReference>
<dbReference type="PRINTS" id="PR00086">
    <property type="entry name" value="LLDHDRGNASE"/>
</dbReference>
<dbReference type="SUPFAM" id="SSF56327">
    <property type="entry name" value="LDH C-terminal domain-like"/>
    <property type="match status" value="1"/>
</dbReference>
<dbReference type="SUPFAM" id="SSF51735">
    <property type="entry name" value="NAD(P)-binding Rossmann-fold domains"/>
    <property type="match status" value="1"/>
</dbReference>
<dbReference type="PROSITE" id="PS00064">
    <property type="entry name" value="L_LDH"/>
    <property type="match status" value="1"/>
</dbReference>
<protein>
    <recommendedName>
        <fullName evidence="2">L-lactate dehydrogenase 2</fullName>
        <shortName evidence="2">L-LDH 2</shortName>
        <ecNumber evidence="2">1.1.1.27</ecNumber>
    </recommendedName>
</protein>
<accession>A7X6Y1</accession>
<gene>
    <name evidence="2" type="primary">ldh2</name>
    <name type="ordered locus">SAHV_2586</name>
</gene>
<reference key="1">
    <citation type="journal article" date="2008" name="Antimicrob. Agents Chemother.">
        <title>Mutated response regulator graR is responsible for phenotypic conversion of Staphylococcus aureus from heterogeneous vancomycin-intermediate resistance to vancomycin-intermediate resistance.</title>
        <authorList>
            <person name="Neoh H.-M."/>
            <person name="Cui L."/>
            <person name="Yuzawa H."/>
            <person name="Takeuchi F."/>
            <person name="Matsuo M."/>
            <person name="Hiramatsu K."/>
        </authorList>
    </citation>
    <scope>NUCLEOTIDE SEQUENCE [LARGE SCALE GENOMIC DNA]</scope>
    <source>
        <strain>Mu3 / ATCC 700698</strain>
    </source>
</reference>
<feature type="chain" id="PRO_0000343839" description="L-lactate dehydrogenase 2">
    <location>
        <begin position="1"/>
        <end position="319"/>
    </location>
</feature>
<feature type="active site" description="Proton acceptor" evidence="2">
    <location>
        <position position="178"/>
    </location>
</feature>
<feature type="binding site" evidence="2">
    <location>
        <position position="16"/>
    </location>
    <ligand>
        <name>NAD(+)</name>
        <dbReference type="ChEBI" id="CHEBI:57540"/>
    </ligand>
</feature>
<feature type="binding site" evidence="2">
    <location>
        <position position="37"/>
    </location>
    <ligand>
        <name>NAD(+)</name>
        <dbReference type="ChEBI" id="CHEBI:57540"/>
    </ligand>
</feature>
<feature type="binding site" evidence="2">
    <location>
        <position position="42"/>
    </location>
    <ligand>
        <name>NAD(+)</name>
        <dbReference type="ChEBI" id="CHEBI:57540"/>
    </ligand>
</feature>
<feature type="binding site" evidence="2">
    <location>
        <position position="68"/>
    </location>
    <ligand>
        <name>NAD(+)</name>
        <dbReference type="ChEBI" id="CHEBI:57540"/>
    </ligand>
</feature>
<feature type="binding site" evidence="2">
    <location>
        <begin position="82"/>
        <end position="83"/>
    </location>
    <ligand>
        <name>NAD(+)</name>
        <dbReference type="ChEBI" id="CHEBI:57540"/>
    </ligand>
</feature>
<feature type="binding site" evidence="2">
    <location>
        <position position="85"/>
    </location>
    <ligand>
        <name>substrate</name>
    </ligand>
</feature>
<feature type="binding site" evidence="2">
    <location>
        <position position="91"/>
    </location>
    <ligand>
        <name>substrate</name>
    </ligand>
</feature>
<feature type="binding site" evidence="2">
    <location>
        <position position="104"/>
    </location>
    <ligand>
        <name>NAD(+)</name>
        <dbReference type="ChEBI" id="CHEBI:57540"/>
    </ligand>
</feature>
<feature type="binding site" evidence="2">
    <location>
        <begin position="121"/>
        <end position="123"/>
    </location>
    <ligand>
        <name>NAD(+)</name>
        <dbReference type="ChEBI" id="CHEBI:57540"/>
    </ligand>
</feature>
<feature type="binding site" evidence="2">
    <location>
        <begin position="123"/>
        <end position="126"/>
    </location>
    <ligand>
        <name>substrate</name>
    </ligand>
</feature>
<feature type="binding site" evidence="2">
    <location>
        <position position="146"/>
    </location>
    <ligand>
        <name>NAD(+)</name>
        <dbReference type="ChEBI" id="CHEBI:57540"/>
    </ligand>
</feature>
<feature type="binding site" evidence="2">
    <location>
        <begin position="151"/>
        <end position="154"/>
    </location>
    <ligand>
        <name>substrate</name>
    </ligand>
</feature>
<feature type="binding site" evidence="2">
    <location>
        <position position="231"/>
    </location>
    <ligand>
        <name>substrate</name>
    </ligand>
</feature>
<feature type="modified residue" description="Phosphotyrosine" evidence="2">
    <location>
        <position position="222"/>
    </location>
</feature>
<name>LDH2_STAA1</name>
<keyword id="KW-0963">Cytoplasm</keyword>
<keyword id="KW-0520">NAD</keyword>
<keyword id="KW-0560">Oxidoreductase</keyword>
<keyword id="KW-0597">Phosphoprotein</keyword>
<keyword id="KW-0346">Stress response</keyword>
<organism>
    <name type="scientific">Staphylococcus aureus (strain Mu3 / ATCC 700698)</name>
    <dbReference type="NCBI Taxonomy" id="418127"/>
    <lineage>
        <taxon>Bacteria</taxon>
        <taxon>Bacillati</taxon>
        <taxon>Bacillota</taxon>
        <taxon>Bacilli</taxon>
        <taxon>Bacillales</taxon>
        <taxon>Staphylococcaceae</taxon>
        <taxon>Staphylococcus</taxon>
    </lineage>
</organism>
<sequence>MKTFGKKVVLIGDGSVGSSYAFAMVTQGVADEFVIIDIAKDKVKADVQDLNHGTVHSPSPVDVKAGEYEDCKDADLVVITAGAPQKPGETRLQLVEKNTKIMKSIVKSVMDSGFDGYFLIAANPVDILTRFVKEYTGLPAERVIGSGTVLDSARLQYLISQELGVAPSSVDASIIGEHGDTELAVWSQANVAGISVYDTLKEQTGSEAKAEEIYVNTRDAAYEIIQAKGSTYYGIALALMRISKAILNNENNVLNVSIQLDGQYGGHKGVYLGVPTLVNQHGAVKIYEMPLSAEEQALFDKSVKILEDTFDSIKYLLED</sequence>
<evidence type="ECO:0000250" key="1">
    <source>
        <dbReference type="UniProtKB" id="Q5HCV0"/>
    </source>
</evidence>
<evidence type="ECO:0000255" key="2">
    <source>
        <dbReference type="HAMAP-Rule" id="MF_00488"/>
    </source>
</evidence>
<evidence type="ECO:0000305" key="3"/>
<comment type="function">
    <text evidence="1 2">Catalyzes the conversion of lactate to pyruvate (Potential). Contributes to S.aureus growth during nitrosative stress in both aerobically and anaerobically cultured cells, despite playing a secondary role in this resistance mechanism (By similarity).</text>
</comment>
<comment type="catalytic activity">
    <reaction evidence="2">
        <text>(S)-lactate + NAD(+) = pyruvate + NADH + H(+)</text>
        <dbReference type="Rhea" id="RHEA:23444"/>
        <dbReference type="ChEBI" id="CHEBI:15361"/>
        <dbReference type="ChEBI" id="CHEBI:15378"/>
        <dbReference type="ChEBI" id="CHEBI:16651"/>
        <dbReference type="ChEBI" id="CHEBI:57540"/>
        <dbReference type="ChEBI" id="CHEBI:57945"/>
        <dbReference type="EC" id="1.1.1.27"/>
    </reaction>
</comment>
<comment type="pathway">
    <text evidence="2">Fermentation; pyruvate fermentation to lactate; (S)-lactate from pyruvate: step 1/1.</text>
</comment>
<comment type="subunit">
    <text evidence="2">Homotetramer.</text>
</comment>
<comment type="subcellular location">
    <subcellularLocation>
        <location evidence="2">Cytoplasm</location>
    </subcellularLocation>
</comment>
<comment type="similarity">
    <text evidence="2 3">Belongs to the LDH/MDH superfamily. LDH family.</text>
</comment>
<proteinExistence type="inferred from homology"/>